<accession>B2VDF6</accession>
<keyword id="KW-0963">Cytoplasm</keyword>
<keyword id="KW-0489">Methyltransferase</keyword>
<keyword id="KW-1185">Reference proteome</keyword>
<keyword id="KW-0694">RNA-binding</keyword>
<keyword id="KW-0698">rRNA processing</keyword>
<keyword id="KW-0949">S-adenosyl-L-methionine</keyword>
<keyword id="KW-0808">Transferase</keyword>
<feature type="chain" id="PRO_0000366738" description="Ribosomal RNA large subunit methyltransferase K/L">
    <location>
        <begin position="1"/>
        <end position="705"/>
    </location>
</feature>
<feature type="domain" description="THUMP" evidence="1">
    <location>
        <begin position="43"/>
        <end position="154"/>
    </location>
</feature>
<proteinExistence type="inferred from homology"/>
<evidence type="ECO:0000255" key="1">
    <source>
        <dbReference type="HAMAP-Rule" id="MF_01858"/>
    </source>
</evidence>
<dbReference type="EC" id="2.1.1.173" evidence="1"/>
<dbReference type="EC" id="2.1.1.264" evidence="1"/>
<dbReference type="EMBL" id="CU468135">
    <property type="protein sequence ID" value="CAO97158.1"/>
    <property type="molecule type" value="Genomic_DNA"/>
</dbReference>
<dbReference type="RefSeq" id="WP_012441829.1">
    <property type="nucleotide sequence ID" value="NC_010694.1"/>
</dbReference>
<dbReference type="SMR" id="B2VDF6"/>
<dbReference type="STRING" id="465817.ETA_21120"/>
<dbReference type="KEGG" id="eta:ETA_21120"/>
<dbReference type="eggNOG" id="COG0116">
    <property type="taxonomic scope" value="Bacteria"/>
</dbReference>
<dbReference type="eggNOG" id="COG1092">
    <property type="taxonomic scope" value="Bacteria"/>
</dbReference>
<dbReference type="HOGENOM" id="CLU_014042_2_0_6"/>
<dbReference type="OrthoDB" id="9809404at2"/>
<dbReference type="Proteomes" id="UP000001726">
    <property type="component" value="Chromosome"/>
</dbReference>
<dbReference type="GO" id="GO:0005737">
    <property type="term" value="C:cytoplasm"/>
    <property type="evidence" value="ECO:0007669"/>
    <property type="project" value="UniProtKB-SubCell"/>
</dbReference>
<dbReference type="GO" id="GO:0052915">
    <property type="term" value="F:23S rRNA (guanine(2445)-N(2))-methyltransferase activity"/>
    <property type="evidence" value="ECO:0007669"/>
    <property type="project" value="UniProtKB-UniRule"/>
</dbReference>
<dbReference type="GO" id="GO:0003723">
    <property type="term" value="F:RNA binding"/>
    <property type="evidence" value="ECO:0007669"/>
    <property type="project" value="UniProtKB-KW"/>
</dbReference>
<dbReference type="GO" id="GO:0070043">
    <property type="term" value="F:rRNA (guanine-N7-)-methyltransferase activity"/>
    <property type="evidence" value="ECO:0007669"/>
    <property type="project" value="UniProtKB-UniRule"/>
</dbReference>
<dbReference type="CDD" id="cd02440">
    <property type="entry name" value="AdoMet_MTases"/>
    <property type="match status" value="1"/>
</dbReference>
<dbReference type="CDD" id="cd11715">
    <property type="entry name" value="THUMP_AdoMetMT"/>
    <property type="match status" value="1"/>
</dbReference>
<dbReference type="FunFam" id="3.30.750.80:FF:000001">
    <property type="entry name" value="Ribosomal RNA large subunit methyltransferase K/L"/>
    <property type="match status" value="1"/>
</dbReference>
<dbReference type="FunFam" id="3.40.50.150:FF:000039">
    <property type="entry name" value="Ribosomal RNA large subunit methyltransferase K/L"/>
    <property type="match status" value="1"/>
</dbReference>
<dbReference type="Gene3D" id="3.30.2130.30">
    <property type="match status" value="1"/>
</dbReference>
<dbReference type="Gene3D" id="3.30.750.80">
    <property type="entry name" value="RNA methyltransferase domain (HRMD) like"/>
    <property type="match status" value="1"/>
</dbReference>
<dbReference type="Gene3D" id="3.40.50.150">
    <property type="entry name" value="Vaccinia Virus protein VP39"/>
    <property type="match status" value="2"/>
</dbReference>
<dbReference type="HAMAP" id="MF_01858">
    <property type="entry name" value="23SrRNA_methyltr_KL"/>
    <property type="match status" value="1"/>
</dbReference>
<dbReference type="InterPro" id="IPR017244">
    <property type="entry name" value="23SrRNA_methyltr_KL"/>
</dbReference>
<dbReference type="InterPro" id="IPR002052">
    <property type="entry name" value="DNA_methylase_N6_adenine_CS"/>
</dbReference>
<dbReference type="InterPro" id="IPR000241">
    <property type="entry name" value="RlmKL-like_Mtase"/>
</dbReference>
<dbReference type="InterPro" id="IPR053943">
    <property type="entry name" value="RlmKL-like_Mtase_CS"/>
</dbReference>
<dbReference type="InterPro" id="IPR054170">
    <property type="entry name" value="RlmL_1st"/>
</dbReference>
<dbReference type="InterPro" id="IPR019614">
    <property type="entry name" value="SAM-dep_methyl-trfase"/>
</dbReference>
<dbReference type="InterPro" id="IPR029063">
    <property type="entry name" value="SAM-dependent_MTases_sf"/>
</dbReference>
<dbReference type="InterPro" id="IPR004114">
    <property type="entry name" value="THUMP_dom"/>
</dbReference>
<dbReference type="NCBIfam" id="NF008748">
    <property type="entry name" value="PRK11783.1"/>
    <property type="match status" value="1"/>
</dbReference>
<dbReference type="PANTHER" id="PTHR47313">
    <property type="entry name" value="RIBOSOMAL RNA LARGE SUBUNIT METHYLTRANSFERASE K/L"/>
    <property type="match status" value="1"/>
</dbReference>
<dbReference type="PANTHER" id="PTHR47313:SF1">
    <property type="entry name" value="RIBOSOMAL RNA LARGE SUBUNIT METHYLTRANSFERASE K_L"/>
    <property type="match status" value="1"/>
</dbReference>
<dbReference type="Pfam" id="PF10672">
    <property type="entry name" value="Methyltrans_SAM"/>
    <property type="match status" value="1"/>
</dbReference>
<dbReference type="Pfam" id="PF22020">
    <property type="entry name" value="RlmL_1st"/>
    <property type="match status" value="1"/>
</dbReference>
<dbReference type="Pfam" id="PF02926">
    <property type="entry name" value="THUMP"/>
    <property type="match status" value="1"/>
</dbReference>
<dbReference type="Pfam" id="PF01170">
    <property type="entry name" value="UPF0020"/>
    <property type="match status" value="1"/>
</dbReference>
<dbReference type="PIRSF" id="PIRSF037618">
    <property type="entry name" value="RNA_Mtase_bacteria_prd"/>
    <property type="match status" value="1"/>
</dbReference>
<dbReference type="SMART" id="SM00981">
    <property type="entry name" value="THUMP"/>
    <property type="match status" value="1"/>
</dbReference>
<dbReference type="SUPFAM" id="SSF53335">
    <property type="entry name" value="S-adenosyl-L-methionine-dependent methyltransferases"/>
    <property type="match status" value="2"/>
</dbReference>
<dbReference type="PROSITE" id="PS51165">
    <property type="entry name" value="THUMP"/>
    <property type="match status" value="1"/>
</dbReference>
<dbReference type="PROSITE" id="PS01261">
    <property type="entry name" value="UPF0020"/>
    <property type="match status" value="1"/>
</dbReference>
<comment type="function">
    <text evidence="1">Specifically methylates the guanine in position 2445 (m2G2445) and the guanine in position 2069 (m7G2069) of 23S rRNA.</text>
</comment>
<comment type="catalytic activity">
    <reaction evidence="1">
        <text>guanosine(2445) in 23S rRNA + S-adenosyl-L-methionine = N(2)-methylguanosine(2445) in 23S rRNA + S-adenosyl-L-homocysteine + H(+)</text>
        <dbReference type="Rhea" id="RHEA:42740"/>
        <dbReference type="Rhea" id="RHEA-COMP:10215"/>
        <dbReference type="Rhea" id="RHEA-COMP:10216"/>
        <dbReference type="ChEBI" id="CHEBI:15378"/>
        <dbReference type="ChEBI" id="CHEBI:57856"/>
        <dbReference type="ChEBI" id="CHEBI:59789"/>
        <dbReference type="ChEBI" id="CHEBI:74269"/>
        <dbReference type="ChEBI" id="CHEBI:74481"/>
        <dbReference type="EC" id="2.1.1.173"/>
    </reaction>
</comment>
<comment type="catalytic activity">
    <reaction evidence="1">
        <text>guanosine(2069) in 23S rRNA + S-adenosyl-L-methionine = N(2)-methylguanosine(2069) in 23S rRNA + S-adenosyl-L-homocysteine + H(+)</text>
        <dbReference type="Rhea" id="RHEA:43772"/>
        <dbReference type="Rhea" id="RHEA-COMP:10688"/>
        <dbReference type="Rhea" id="RHEA-COMP:10689"/>
        <dbReference type="ChEBI" id="CHEBI:15378"/>
        <dbReference type="ChEBI" id="CHEBI:57856"/>
        <dbReference type="ChEBI" id="CHEBI:59789"/>
        <dbReference type="ChEBI" id="CHEBI:74269"/>
        <dbReference type="ChEBI" id="CHEBI:74481"/>
        <dbReference type="EC" id="2.1.1.264"/>
    </reaction>
</comment>
<comment type="subcellular location">
    <subcellularLocation>
        <location evidence="1">Cytoplasm</location>
    </subcellularLocation>
</comment>
<comment type="similarity">
    <text evidence="1">Belongs to the methyltransferase superfamily. RlmKL family.</text>
</comment>
<sequence length="705" mass="79202">MNSLFASTARGLEELLKNELEGLGAESCQIVQGGVHYQVSDRLMYQSLMWSRLASRILLPLTECAVYSDLDLYLGVQAIDWPAMFSSDKTFAVHFSGLNEVIRNSQYGALKVKDAIVDSFTRKNLPRPNVDREQPDIRVNVWLNKDTASIALDLSGEGLHQRGYRQQTGQAPLKENLAAAIVLRSGWQSGTPLVDPMCGSGTLLIEAAMIASDRAPGLQRKHWGFTGWSKFDPSLWSDVTREAHERARQGIAQTSSRFFGYDNDARVIDRARINARNAGLAELIGFTTQDVLKLTNPLAQGPVGTVLSNPPYGERLDSEPALIALHGQLGRIMKTHFGGWNLSLFSASPELLSCLQLRAERQFKAKNGPLDCVQKNYQLAENPTGAPAGQLAEDYANRLRKNVKKLDKWARQEGIQCYRVYDADLPDYNVAVDRYGDWVVIQEYAAPKTIDPAKARQRLFDVISATLSVLDLPANKLVLKTREKQKGKSQYQKLGEKGDFFEVAEYNAKLWVNLTDYLDTGVFLDHRIARKMLGQMSKGKDFLNLFAYTGSASVHAGLGGARTTTTIDMSRTYLEWAERNMRLNGLSGRQHRLMQADCLSWLRDADEQFDLIFIDPPTFSNSKRMDESFDVQRDHLDLMKDLKRLLRKNGTVMFSNNKRGFKMDFAGMEALGLVANEITTKTQSQDFARNRQIHNCWLITHAGKE</sequence>
<protein>
    <recommendedName>
        <fullName evidence="1">Ribosomal RNA large subunit methyltransferase K/L</fullName>
    </recommendedName>
    <domain>
        <recommendedName>
            <fullName evidence="1">23S rRNA m2G2445 methyltransferase</fullName>
            <ecNumber evidence="1">2.1.1.173</ecNumber>
        </recommendedName>
        <alternativeName>
            <fullName evidence="1">rRNA (guanine-N(2)-)-methyltransferase RlmL</fullName>
        </alternativeName>
    </domain>
    <domain>
        <recommendedName>
            <fullName evidence="1">23S rRNA m7G2069 methyltransferase</fullName>
            <ecNumber evidence="1">2.1.1.264</ecNumber>
        </recommendedName>
        <alternativeName>
            <fullName evidence="1">rRNA (guanine-N(7)-)-methyltransferase RlmK</fullName>
        </alternativeName>
    </domain>
</protein>
<organism>
    <name type="scientific">Erwinia tasmaniensis (strain DSM 17950 / CFBP 7177 / CIP 109463 / NCPPB 4357 / Et1/99)</name>
    <dbReference type="NCBI Taxonomy" id="465817"/>
    <lineage>
        <taxon>Bacteria</taxon>
        <taxon>Pseudomonadati</taxon>
        <taxon>Pseudomonadota</taxon>
        <taxon>Gammaproteobacteria</taxon>
        <taxon>Enterobacterales</taxon>
        <taxon>Erwiniaceae</taxon>
        <taxon>Erwinia</taxon>
    </lineage>
</organism>
<gene>
    <name evidence="1" type="primary">rlmL</name>
    <name type="ordered locus">ETA_21120</name>
</gene>
<name>RLMKL_ERWT9</name>
<reference key="1">
    <citation type="journal article" date="2008" name="Environ. Microbiol.">
        <title>The genome of Erwinia tasmaniensis strain Et1/99, a non-pathogenic bacterium in the genus Erwinia.</title>
        <authorList>
            <person name="Kube M."/>
            <person name="Migdoll A.M."/>
            <person name="Mueller I."/>
            <person name="Kuhl H."/>
            <person name="Beck A."/>
            <person name="Reinhardt R."/>
            <person name="Geider K."/>
        </authorList>
    </citation>
    <scope>NUCLEOTIDE SEQUENCE [LARGE SCALE GENOMIC DNA]</scope>
    <source>
        <strain>DSM 17950 / CFBP 7177 / CIP 109463 / NCPPB 4357 / Et1/99</strain>
    </source>
</reference>